<dbReference type="EC" id="5.4.99.25" evidence="1"/>
<dbReference type="EMBL" id="AE009441">
    <property type="protein sequence ID" value="AAL63082.1"/>
    <property type="molecule type" value="Genomic_DNA"/>
</dbReference>
<dbReference type="RefSeq" id="WP_011007554.1">
    <property type="nucleotide sequence ID" value="NC_003364.1"/>
</dbReference>
<dbReference type="SMR" id="Q8ZYB3"/>
<dbReference type="FunCoup" id="Q8ZYB3">
    <property type="interactions" value="120"/>
</dbReference>
<dbReference type="STRING" id="178306.PAE0865"/>
<dbReference type="EnsemblBacteria" id="AAL63082">
    <property type="protein sequence ID" value="AAL63082"/>
    <property type="gene ID" value="PAE0865"/>
</dbReference>
<dbReference type="GeneID" id="1465314"/>
<dbReference type="KEGG" id="pai:PAE0865"/>
<dbReference type="PATRIC" id="fig|178306.9.peg.634"/>
<dbReference type="eggNOG" id="arCOG00987">
    <property type="taxonomic scope" value="Archaea"/>
</dbReference>
<dbReference type="HOGENOM" id="CLU_032087_3_0_2"/>
<dbReference type="InParanoid" id="Q8ZYB3"/>
<dbReference type="Proteomes" id="UP000002439">
    <property type="component" value="Chromosome"/>
</dbReference>
<dbReference type="GO" id="GO:0009982">
    <property type="term" value="F:pseudouridine synthase activity"/>
    <property type="evidence" value="ECO:0000318"/>
    <property type="project" value="GO_Central"/>
</dbReference>
<dbReference type="GO" id="GO:0003723">
    <property type="term" value="F:RNA binding"/>
    <property type="evidence" value="ECO:0007669"/>
    <property type="project" value="InterPro"/>
</dbReference>
<dbReference type="GO" id="GO:0160148">
    <property type="term" value="F:tRNA pseudouridine(55) synthase activity"/>
    <property type="evidence" value="ECO:0007669"/>
    <property type="project" value="UniProtKB-EC"/>
</dbReference>
<dbReference type="GO" id="GO:0000495">
    <property type="term" value="P:box H/ACA sno(s)RNA 3'-end processing"/>
    <property type="evidence" value="ECO:0000318"/>
    <property type="project" value="GO_Central"/>
</dbReference>
<dbReference type="GO" id="GO:1990481">
    <property type="term" value="P:mRNA pseudouridine synthesis"/>
    <property type="evidence" value="ECO:0000318"/>
    <property type="project" value="GO_Central"/>
</dbReference>
<dbReference type="GO" id="GO:0031118">
    <property type="term" value="P:rRNA pseudouridine synthesis"/>
    <property type="evidence" value="ECO:0000318"/>
    <property type="project" value="GO_Central"/>
</dbReference>
<dbReference type="GO" id="GO:0031120">
    <property type="term" value="P:snRNA pseudouridine synthesis"/>
    <property type="evidence" value="ECO:0000318"/>
    <property type="project" value="GO_Central"/>
</dbReference>
<dbReference type="GO" id="GO:0031119">
    <property type="term" value="P:tRNA pseudouridine synthesis"/>
    <property type="evidence" value="ECO:0007669"/>
    <property type="project" value="UniProtKB-UniRule"/>
</dbReference>
<dbReference type="CDD" id="cd02572">
    <property type="entry name" value="PseudoU_synth_hDyskerin"/>
    <property type="match status" value="1"/>
</dbReference>
<dbReference type="CDD" id="cd21148">
    <property type="entry name" value="PUA_Cbf5"/>
    <property type="match status" value="1"/>
</dbReference>
<dbReference type="FunFam" id="3.30.2350.10:FF:000001">
    <property type="entry name" value="H/ACA ribonucleoprotein complex subunit CBF5"/>
    <property type="match status" value="1"/>
</dbReference>
<dbReference type="Gene3D" id="3.30.2350.10">
    <property type="entry name" value="Pseudouridine synthase"/>
    <property type="match status" value="1"/>
</dbReference>
<dbReference type="Gene3D" id="2.30.130.10">
    <property type="entry name" value="PUA domain"/>
    <property type="match status" value="1"/>
</dbReference>
<dbReference type="HAMAP" id="MF_01081">
    <property type="entry name" value="TruB_arch"/>
    <property type="match status" value="1"/>
</dbReference>
<dbReference type="InterPro" id="IPR012960">
    <property type="entry name" value="Dyskerin-like"/>
</dbReference>
<dbReference type="InterPro" id="IPR020103">
    <property type="entry name" value="PsdUridine_synth_cat_dom_sf"/>
</dbReference>
<dbReference type="InterPro" id="IPR002501">
    <property type="entry name" value="PsdUridine_synth_N"/>
</dbReference>
<dbReference type="InterPro" id="IPR002478">
    <property type="entry name" value="PUA"/>
</dbReference>
<dbReference type="InterPro" id="IPR015947">
    <property type="entry name" value="PUA-like_sf"/>
</dbReference>
<dbReference type="InterPro" id="IPR036974">
    <property type="entry name" value="PUA_sf"/>
</dbReference>
<dbReference type="InterPro" id="IPR004802">
    <property type="entry name" value="tRNA_PsdUridine_synth_B_fam"/>
</dbReference>
<dbReference type="InterPro" id="IPR026326">
    <property type="entry name" value="TruB_arch"/>
</dbReference>
<dbReference type="InterPro" id="IPR032819">
    <property type="entry name" value="TruB_C"/>
</dbReference>
<dbReference type="InterPro" id="IPR004521">
    <property type="entry name" value="Uncharacterised_CHP00451"/>
</dbReference>
<dbReference type="NCBIfam" id="TIGR00425">
    <property type="entry name" value="CBF5"/>
    <property type="match status" value="1"/>
</dbReference>
<dbReference type="NCBIfam" id="NF003280">
    <property type="entry name" value="PRK04270.1"/>
    <property type="match status" value="1"/>
</dbReference>
<dbReference type="NCBIfam" id="TIGR00451">
    <property type="entry name" value="unchar_dom_2"/>
    <property type="match status" value="1"/>
</dbReference>
<dbReference type="PANTHER" id="PTHR23127">
    <property type="entry name" value="CENTROMERE/MICROTUBULE BINDING PROTEIN CBF5"/>
    <property type="match status" value="1"/>
</dbReference>
<dbReference type="PANTHER" id="PTHR23127:SF0">
    <property type="entry name" value="H_ACA RIBONUCLEOPROTEIN COMPLEX SUBUNIT DKC1"/>
    <property type="match status" value="1"/>
</dbReference>
<dbReference type="Pfam" id="PF08068">
    <property type="entry name" value="DKCLD"/>
    <property type="match status" value="1"/>
</dbReference>
<dbReference type="Pfam" id="PF01472">
    <property type="entry name" value="PUA"/>
    <property type="match status" value="1"/>
</dbReference>
<dbReference type="Pfam" id="PF16198">
    <property type="entry name" value="TruB_C_2"/>
    <property type="match status" value="1"/>
</dbReference>
<dbReference type="Pfam" id="PF01509">
    <property type="entry name" value="TruB_N"/>
    <property type="match status" value="1"/>
</dbReference>
<dbReference type="SMART" id="SM01136">
    <property type="entry name" value="DKCLD"/>
    <property type="match status" value="1"/>
</dbReference>
<dbReference type="SMART" id="SM00359">
    <property type="entry name" value="PUA"/>
    <property type="match status" value="1"/>
</dbReference>
<dbReference type="SUPFAM" id="SSF55120">
    <property type="entry name" value="Pseudouridine synthase"/>
    <property type="match status" value="1"/>
</dbReference>
<dbReference type="SUPFAM" id="SSF88697">
    <property type="entry name" value="PUA domain-like"/>
    <property type="match status" value="1"/>
</dbReference>
<dbReference type="PROSITE" id="PS50890">
    <property type="entry name" value="PUA"/>
    <property type="match status" value="1"/>
</dbReference>
<reference key="1">
    <citation type="journal article" date="2002" name="Proc. Natl. Acad. Sci. U.S.A.">
        <title>Genome sequence of the hyperthermophilic crenarchaeon Pyrobaculum aerophilum.</title>
        <authorList>
            <person name="Fitz-Gibbon S.T."/>
            <person name="Ladner H."/>
            <person name="Kim U.-J."/>
            <person name="Stetter K.O."/>
            <person name="Simon M.I."/>
            <person name="Miller J.H."/>
        </authorList>
    </citation>
    <scope>NUCLEOTIDE SEQUENCE [LARGE SCALE GENOMIC DNA]</scope>
    <source>
        <strain>ATCC 51768 / DSM 7523 / JCM 9630 / CIP 104966 / NBRC 100827 / IM2</strain>
    </source>
</reference>
<gene>
    <name evidence="1" type="primary">truB</name>
    <name type="ordered locus">PAE0865</name>
</gene>
<proteinExistence type="inferred from homology"/>
<accession>Q8ZYB3</accession>
<evidence type="ECO:0000255" key="1">
    <source>
        <dbReference type="HAMAP-Rule" id="MF_01081"/>
    </source>
</evidence>
<evidence type="ECO:0000256" key="2">
    <source>
        <dbReference type="SAM" id="MobiDB-lite"/>
    </source>
</evidence>
<name>TRUB_PYRAE</name>
<protein>
    <recommendedName>
        <fullName evidence="1">Probable tRNA pseudouridine synthase B</fullName>
        <ecNumber evidence="1">5.4.99.25</ecNumber>
    </recommendedName>
    <alternativeName>
        <fullName evidence="1">tRNA pseudouridine(55) synthase</fullName>
        <shortName evidence="1">Psi55 synthase</shortName>
    </alternativeName>
    <alternativeName>
        <fullName evidence="1">tRNA pseudouridylate synthase</fullName>
    </alternativeName>
    <alternativeName>
        <fullName evidence="1">tRNA-uridine isomerase</fullName>
    </alternativeName>
</protein>
<sequence>MKCPSREVFSKFEESTNPQWGKPPSQRSTEEYIKYSLVILDKPRGPSSHEVAAWVKKILGVERAGHAGTLDPKVSGVLPIAIAEGTKVLMALSRSDKVYVAVAKFHGDVDEDKLRAVLQEFQGVIYQKPPLRSAVKRQLRTRRVYSLDLLELDGRYAVIKMHVEAGTYARKIIHDIGEVLGVGANMRELRRIAVSCYTEDEAVTLQDIADAYYIWKHYGDDTYLRRVLLPIEEIARHLPKIWVRDSAVDAICNGAPLAAPGISKFETPFSKGDLVAMFTLKGELIGIGRALVGSEEVKKMERGLVARTDRVVMRRGTYPAMWKRKAKSQSDSA</sequence>
<comment type="function">
    <text evidence="1">Could be responsible for synthesis of pseudouridine from uracil-55 in the psi GC loop of transfer RNAs.</text>
</comment>
<comment type="catalytic activity">
    <reaction evidence="1">
        <text>uridine(55) in tRNA = pseudouridine(55) in tRNA</text>
        <dbReference type="Rhea" id="RHEA:42532"/>
        <dbReference type="Rhea" id="RHEA-COMP:10101"/>
        <dbReference type="Rhea" id="RHEA-COMP:10102"/>
        <dbReference type="ChEBI" id="CHEBI:65314"/>
        <dbReference type="ChEBI" id="CHEBI:65315"/>
        <dbReference type="EC" id="5.4.99.25"/>
    </reaction>
</comment>
<comment type="similarity">
    <text evidence="1">Belongs to the pseudouridine synthase TruB family. Type 2 subfamily.</text>
</comment>
<keyword id="KW-0413">Isomerase</keyword>
<keyword id="KW-1185">Reference proteome</keyword>
<keyword id="KW-0819">tRNA processing</keyword>
<feature type="chain" id="PRO_0000121967" description="Probable tRNA pseudouridine synthase B">
    <location>
        <begin position="1"/>
        <end position="333"/>
    </location>
</feature>
<feature type="domain" description="PUA" evidence="1">
    <location>
        <begin position="238"/>
        <end position="313"/>
    </location>
</feature>
<feature type="region of interest" description="Disordered" evidence="2">
    <location>
        <begin position="1"/>
        <end position="27"/>
    </location>
</feature>
<feature type="compositionally biased region" description="Basic and acidic residues" evidence="2">
    <location>
        <begin position="1"/>
        <end position="14"/>
    </location>
</feature>
<feature type="active site" description="Nucleophile" evidence="1">
    <location>
        <position position="71"/>
    </location>
</feature>
<organism>
    <name type="scientific">Pyrobaculum aerophilum (strain ATCC 51768 / DSM 7523 / JCM 9630 / CIP 104966 / NBRC 100827 / IM2)</name>
    <dbReference type="NCBI Taxonomy" id="178306"/>
    <lineage>
        <taxon>Archaea</taxon>
        <taxon>Thermoproteota</taxon>
        <taxon>Thermoprotei</taxon>
        <taxon>Thermoproteales</taxon>
        <taxon>Thermoproteaceae</taxon>
        <taxon>Pyrobaculum</taxon>
    </lineage>
</organism>